<sequence length="515" mass="58485">MPKKRRSRRRPQPIIRWVSLTLTLLALCRPIQTWRCSLSLGNQQWMTAYNQEAKFSISIDQILEAHNQSPFCAKSPRYTLDSVNGYPKIYWPPPQGRRRFGARAMVTYDCEPRCPYVGADRFDCPHWDNASQADQGSFYVNHQILFLHLKQCHGIFTLTWEIWGYDPLITFSLHKIPDPPQPDFPQLNSDWVPSVRSWALLLNQTARAFPDCAICWEPSPPWAPEILVYNKTISSSGPGLALPDAQIFWVNTSSFNTTQGWHHPSQRLLFNVSQGNALLLPPISLVNLSTASSAPPTRVRRSPVAALTLGLALSVGLTGINVAVSALSHQRLTSLIHVLEQDQQRLITAINQTHYNLLNVASVVAQNRRGLDWLYIRLGFQSLCPTINEPCCFLRIQNDSIIRLGDLQPLSQRVSTDWQWPWNWDLGLTAWVRETIHSVLSLFLLALFLLFLAPCLIKCLTSRLLKLLRQAPHFPEISLTPKPDSDYQALLPSAPEIYSHLSPVKPDYINLRPCP</sequence>
<proteinExistence type="inferred from homology"/>
<feature type="signal peptide" evidence="2">
    <location>
        <begin position="1"/>
        <end position="33"/>
    </location>
</feature>
<feature type="chain" id="PRO_0000239552" description="Envelope glycoprotein">
    <location>
        <begin position="34"/>
        <end position="515"/>
    </location>
</feature>
<feature type="chain" id="PRO_0000040691" description="Surface protein" evidence="1">
    <location>
        <begin position="34"/>
        <end position="301"/>
    </location>
</feature>
<feature type="chain" id="PRO_0000040692" description="Transmembrane protein" evidence="1">
    <location>
        <begin position="302"/>
        <end position="515"/>
    </location>
</feature>
<feature type="topological domain" description="Extracellular" evidence="2">
    <location>
        <begin position="34"/>
        <end position="435"/>
    </location>
</feature>
<feature type="transmembrane region" description="Helical" evidence="2">
    <location>
        <begin position="436"/>
        <end position="456"/>
    </location>
</feature>
<feature type="topological domain" description="Cytoplasmic" evidence="2">
    <location>
        <begin position="457"/>
        <end position="515"/>
    </location>
</feature>
<feature type="region of interest" description="Fusion peptide" evidence="2">
    <location>
        <begin position="304"/>
        <end position="324"/>
    </location>
</feature>
<feature type="region of interest" description="Immunosuppression" evidence="1">
    <location>
        <begin position="365"/>
        <end position="381"/>
    </location>
</feature>
<feature type="coiled-coil region" evidence="2">
    <location>
        <begin position="330"/>
        <end position="376"/>
    </location>
</feature>
<feature type="coiled-coil region" evidence="2">
    <location>
        <begin position="388"/>
        <end position="420"/>
    </location>
</feature>
<feature type="short sequence motif" description="CXXC">
    <location>
        <begin position="212"/>
        <end position="215"/>
    </location>
</feature>
<feature type="short sequence motif" description="CX6CC">
    <location>
        <begin position="384"/>
        <end position="392"/>
    </location>
</feature>
<feature type="site" description="Cleavage; by host" evidence="1">
    <location>
        <begin position="301"/>
        <end position="302"/>
    </location>
</feature>
<feature type="lipid moiety-binding region" description="S-palmitoyl cysteine; by host" evidence="1">
    <location>
        <position position="455"/>
    </location>
</feature>
<feature type="glycosylation site" description="N-linked (GlcNAc...) asparagine; by host" evidence="2">
    <location>
        <position position="129"/>
    </location>
</feature>
<feature type="glycosylation site" description="N-linked (GlcNAc...) asparagine; by host" evidence="2">
    <location>
        <position position="203"/>
    </location>
</feature>
<feature type="glycosylation site" description="N-linked (GlcNAc...) asparagine; by host" evidence="2">
    <location>
        <position position="230"/>
    </location>
</feature>
<feature type="glycosylation site" description="N-linked (GlcNAc...) asparagine; by host" evidence="2">
    <location>
        <position position="251"/>
    </location>
</feature>
<feature type="glycosylation site" description="N-linked (GlcNAc...) asparagine; by host" evidence="2">
    <location>
        <position position="256"/>
    </location>
</feature>
<feature type="glycosylation site" description="N-linked (GlcNAc...) asparagine; by host" evidence="2">
    <location>
        <position position="271"/>
    </location>
</feature>
<feature type="glycosylation site" description="N-linked (GlcNAc...) asparagine; by host" evidence="2">
    <location>
        <position position="287"/>
    </location>
</feature>
<feature type="glycosylation site" description="N-linked (GlcNAc...) asparagine; by host" evidence="2">
    <location>
        <position position="351"/>
    </location>
</feature>
<feature type="glycosylation site" description="N-linked (GlcNAc...) asparagine; by host" evidence="2">
    <location>
        <position position="398"/>
    </location>
</feature>
<feature type="disulfide bond" description="Interchain (between SU and TM chains, or C-215 with C-392); in linked form" evidence="1">
    <location>
        <begin position="212"/>
        <end position="392"/>
    </location>
</feature>
<feature type="disulfide bond" evidence="1">
    <location>
        <begin position="212"/>
        <end position="215"/>
    </location>
</feature>
<feature type="disulfide bond" evidence="1">
    <location>
        <begin position="384"/>
        <end position="391"/>
    </location>
</feature>
<organism>
    <name type="scientific">Bovine leukemia virus (isolate American FLK)</name>
    <name type="common">BLV</name>
    <dbReference type="NCBI Taxonomy" id="11902"/>
    <lineage>
        <taxon>Viruses</taxon>
        <taxon>Riboviria</taxon>
        <taxon>Pararnavirae</taxon>
        <taxon>Artverviricota</taxon>
        <taxon>Revtraviricetes</taxon>
        <taxon>Ortervirales</taxon>
        <taxon>Retroviridae</taxon>
        <taxon>Orthoretrovirinae</taxon>
        <taxon>Deltaretrovirus</taxon>
        <taxon>Bovine leukemia virus</taxon>
    </lineage>
</organism>
<dbReference type="EMBL" id="M35242">
    <property type="protein sequence ID" value="AAA42793.1"/>
    <property type="molecule type" value="Genomic_RNA"/>
</dbReference>
<dbReference type="SMR" id="P25504"/>
<dbReference type="GlyCosmos" id="P25504">
    <property type="glycosylation" value="9 sites, No reported glycans"/>
</dbReference>
<dbReference type="GO" id="GO:0020002">
    <property type="term" value="C:host cell plasma membrane"/>
    <property type="evidence" value="ECO:0007669"/>
    <property type="project" value="UniProtKB-SubCell"/>
</dbReference>
<dbReference type="GO" id="GO:0016020">
    <property type="term" value="C:membrane"/>
    <property type="evidence" value="ECO:0007669"/>
    <property type="project" value="UniProtKB-KW"/>
</dbReference>
<dbReference type="GO" id="GO:0019031">
    <property type="term" value="C:viral envelope"/>
    <property type="evidence" value="ECO:0007669"/>
    <property type="project" value="UniProtKB-KW"/>
</dbReference>
<dbReference type="GO" id="GO:0055036">
    <property type="term" value="C:virion membrane"/>
    <property type="evidence" value="ECO:0007669"/>
    <property type="project" value="UniProtKB-SubCell"/>
</dbReference>
<dbReference type="GO" id="GO:0019064">
    <property type="term" value="P:fusion of virus membrane with host plasma membrane"/>
    <property type="evidence" value="ECO:0007669"/>
    <property type="project" value="UniProtKB-KW"/>
</dbReference>
<dbReference type="GO" id="GO:0046718">
    <property type="term" value="P:symbiont entry into host cell"/>
    <property type="evidence" value="ECO:0007669"/>
    <property type="project" value="UniProtKB-KW"/>
</dbReference>
<dbReference type="GO" id="GO:0019062">
    <property type="term" value="P:virion attachment to host cell"/>
    <property type="evidence" value="ECO:0007669"/>
    <property type="project" value="UniProtKB-KW"/>
</dbReference>
<dbReference type="Gene3D" id="1.10.287.210">
    <property type="match status" value="1"/>
</dbReference>
<dbReference type="InterPro" id="IPR018154">
    <property type="entry name" value="TLV/ENV_coat_polyprotein"/>
</dbReference>
<dbReference type="PANTHER" id="PTHR10424:SF73">
    <property type="entry name" value="ENDOGENOUS RETROVIRUS GROUP FC1 ENV POLYPROTEIN-RELATED"/>
    <property type="match status" value="1"/>
</dbReference>
<dbReference type="PANTHER" id="PTHR10424">
    <property type="entry name" value="VIRAL ENVELOPE PROTEIN"/>
    <property type="match status" value="1"/>
</dbReference>
<dbReference type="Pfam" id="PF00429">
    <property type="entry name" value="TLV_coat"/>
    <property type="match status" value="1"/>
</dbReference>
<dbReference type="SUPFAM" id="SSF58069">
    <property type="entry name" value="Virus ectodomain"/>
    <property type="match status" value="1"/>
</dbReference>
<organismHost>
    <name type="scientific">Bos taurus</name>
    <name type="common">Bovine</name>
    <dbReference type="NCBI Taxonomy" id="9913"/>
</organismHost>
<name>ENV_BLVAF</name>
<protein>
    <recommendedName>
        <fullName>Envelope glycoprotein</fullName>
    </recommendedName>
    <alternativeName>
        <fullName>Env polyprotein</fullName>
    </alternativeName>
    <component>
        <recommendedName>
            <fullName>Surface protein</fullName>
            <shortName>SU</shortName>
        </recommendedName>
        <alternativeName>
            <fullName>Glycoprotein 51</fullName>
            <shortName>gp51</shortName>
        </alternativeName>
    </component>
    <component>
        <recommendedName>
            <fullName>Transmembrane protein</fullName>
            <shortName>TM</shortName>
        </recommendedName>
        <alternativeName>
            <fullName>Glycoprotein 30</fullName>
            <shortName>gp30</shortName>
        </alternativeName>
    </component>
</protein>
<keyword id="KW-0165">Cleavage on pair of basic residues</keyword>
<keyword id="KW-0175">Coiled coil</keyword>
<keyword id="KW-1015">Disulfide bond</keyword>
<keyword id="KW-1169">Fusion of virus membrane with host cell membrane</keyword>
<keyword id="KW-1168">Fusion of virus membrane with host membrane</keyword>
<keyword id="KW-0325">Glycoprotein</keyword>
<keyword id="KW-1032">Host cell membrane</keyword>
<keyword id="KW-1043">Host membrane</keyword>
<keyword id="KW-0945">Host-virus interaction</keyword>
<keyword id="KW-0449">Lipoprotein</keyword>
<keyword id="KW-0472">Membrane</keyword>
<keyword id="KW-0564">Palmitate</keyword>
<keyword id="KW-0732">Signal</keyword>
<keyword id="KW-0812">Transmembrane</keyword>
<keyword id="KW-1133">Transmembrane helix</keyword>
<keyword id="KW-1161">Viral attachment to host cell</keyword>
<keyword id="KW-0261">Viral envelope protein</keyword>
<keyword id="KW-1162">Viral penetration into host cytoplasm</keyword>
<keyword id="KW-0946">Virion</keyword>
<keyword id="KW-1160">Virus entry into host cell</keyword>
<reference key="1">
    <citation type="journal article" date="1990" name="J. Virol.">
        <title>Sequence variability of bovine leukemia virus env gene and its relevance to the structure and antigenicity of the glycoproteins.</title>
        <authorList>
            <person name="Mamoun R.Z."/>
            <person name="Morisson M."/>
            <person name="Rebeyrotte N."/>
            <person name="Busetta B."/>
            <person name="Couez D."/>
            <person name="Kettmann R."/>
            <person name="Hospital M."/>
            <person name="Guillemain B."/>
        </authorList>
    </citation>
    <scope>NUCLEOTIDE SEQUENCE [GENOMIC RNA]</scope>
</reference>
<accession>P25504</accession>
<gene>
    <name type="primary">env</name>
</gene>
<evidence type="ECO:0000250" key="1"/>
<evidence type="ECO:0000255" key="2"/>
<comment type="function">
    <text evidence="1">The surface protein (SU) attaches the virus to the host cell by binding to its receptor. This interaction triggers the refolding of the transmembrane protein (TM) and is thought to activate its fusogenic potential by unmasking its fusion peptide. Fusion occurs at the host cell plasma membrane (By similarity).</text>
</comment>
<comment type="function">
    <text evidence="1">The transmembrane protein (TM) acts as a class I viral fusion protein. Under the current model, the protein has at least 3 conformational states: pre-fusion native state, pre-hairpin intermediate state, and post-fusion hairpin state. During viral and target cell membrane fusion, the coiled coil regions (heptad repeats) assume a trimer-of-hairpins structure, positioning the fusion peptide in close proximity to the C-terminal region of the ectodomain. The formation of this structure appears to drive apposition and subsequent fusion of viral and target cell membranes. Membranes fusion leads to delivery of the nucleocapsid into the cytoplasm (By similarity).</text>
</comment>
<comment type="subunit">
    <text evidence="1">The mature envelope protein (Env) consists of a trimer of SU-TM heterodimers attached by a labile interchain disulfide bond.</text>
</comment>
<comment type="subcellular location">
    <molecule>Transmembrane protein</molecule>
    <subcellularLocation>
        <location evidence="1">Virion membrane</location>
        <topology evidence="1">Single-pass type I membrane protein</topology>
    </subcellularLocation>
    <subcellularLocation>
        <location evidence="1">Host cell membrane</location>
        <topology evidence="1">Single-pass type I membrane protein</topology>
    </subcellularLocation>
    <text evidence="1">It is probably concentrated at the site of budding and incorporated into the virions possibly by contacts between the cytoplasmic tail of Env and the N-terminus of Gag.</text>
</comment>
<comment type="subcellular location">
    <molecule>Surface protein</molecule>
    <subcellularLocation>
        <location evidence="1">Virion membrane</location>
        <topology evidence="1">Peripheral membrane protein</topology>
    </subcellularLocation>
    <subcellularLocation>
        <location evidence="1">Host cell membrane</location>
        <topology evidence="1">Peripheral membrane protein</topology>
    </subcellularLocation>
    <text evidence="1">The surface protein is not anchored to the viral envelope, but associates with the extravirion surface through its binding to TM. It is probably concentrated at the site of budding and incorporated into the virions possibly by contacts between the cytoplasmic tail of Env and the N-terminus of Gag (By similarity).</text>
</comment>
<comment type="domain">
    <text evidence="1">The 17 amino acids long immunosuppressive region is present in many retroviral envelope proteins. Synthetic peptides derived from this relatively conserved sequence inhibit immune function in vitro and in vivo (By similarity).</text>
</comment>
<comment type="PTM">
    <text evidence="1">Specific enzymatic cleavages in vivo yield mature proteins. Envelope glycoproteins are synthesized as an inactive precursor that is N-glycosylated and processed likely by host cell furin or by a furin-like protease in the Golgi to yield the mature SU and TM proteins. The cleavage site between SU and TM requires the minimal sequence [KR]-X-[KR]-R (By similarity).</text>
</comment>
<comment type="PTM">
    <text evidence="1">The CXXC motif is highly conserved across a broad range of retroviral envelope proteins. It is thought to participate in the formation of a labile disulfide bond possibly with the CX6CC motif present in the transmembrane protein. Isomerization of the intersubunit disulfide bond to an SU intrachain disulfide bond is thought to occur upon receptor recognition in order to allow membrane fusion (By similarity).</text>
</comment>
<comment type="PTM">
    <text evidence="1">The transmembrane protein is palmitoylated.</text>
</comment>